<dbReference type="EMBL" id="CP000800">
    <property type="protein sequence ID" value="ABV18577.1"/>
    <property type="molecule type" value="Genomic_DNA"/>
</dbReference>
<dbReference type="RefSeq" id="WP_001302036.1">
    <property type="nucleotide sequence ID" value="NC_009801.1"/>
</dbReference>
<dbReference type="SMR" id="A7ZMK9"/>
<dbReference type="GeneID" id="75203048"/>
<dbReference type="KEGG" id="ecw:EcE24377A_1962"/>
<dbReference type="HOGENOM" id="CLU_090931_5_0_6"/>
<dbReference type="Proteomes" id="UP000001122">
    <property type="component" value="Chromosome"/>
</dbReference>
<dbReference type="CDD" id="cd20293">
    <property type="entry name" value="cupin_HutD_N"/>
    <property type="match status" value="1"/>
</dbReference>
<dbReference type="Gene3D" id="2.60.120.10">
    <property type="entry name" value="Jelly Rolls"/>
    <property type="match status" value="1"/>
</dbReference>
<dbReference type="HAMAP" id="MF_01591">
    <property type="entry name" value="Ves"/>
    <property type="match status" value="1"/>
</dbReference>
<dbReference type="InterPro" id="IPR014710">
    <property type="entry name" value="RmlC-like_jellyroll"/>
</dbReference>
<dbReference type="InterPro" id="IPR011051">
    <property type="entry name" value="RmlC_Cupin_sf"/>
</dbReference>
<dbReference type="InterPro" id="IPR010282">
    <property type="entry name" value="Uncharacterised_HutD/Ves"/>
</dbReference>
<dbReference type="InterPro" id="IPR023482">
    <property type="entry name" value="Uncharacterised_Ves"/>
</dbReference>
<dbReference type="NCBIfam" id="NF008488">
    <property type="entry name" value="PRK11396.1"/>
    <property type="match status" value="1"/>
</dbReference>
<dbReference type="PANTHER" id="PTHR37943">
    <property type="entry name" value="PROTEIN VES"/>
    <property type="match status" value="1"/>
</dbReference>
<dbReference type="PANTHER" id="PTHR37943:SF1">
    <property type="entry name" value="PROTEIN VES"/>
    <property type="match status" value="1"/>
</dbReference>
<dbReference type="Pfam" id="PF05962">
    <property type="entry name" value="HutD"/>
    <property type="match status" value="1"/>
</dbReference>
<dbReference type="SUPFAM" id="SSF51182">
    <property type="entry name" value="RmlC-like cupins"/>
    <property type="match status" value="1"/>
</dbReference>
<name>VES_ECO24</name>
<reference key="1">
    <citation type="journal article" date="2008" name="J. Bacteriol.">
        <title>The pangenome structure of Escherichia coli: comparative genomic analysis of E. coli commensal and pathogenic isolates.</title>
        <authorList>
            <person name="Rasko D.A."/>
            <person name="Rosovitz M.J."/>
            <person name="Myers G.S.A."/>
            <person name="Mongodin E.F."/>
            <person name="Fricke W.F."/>
            <person name="Gajer P."/>
            <person name="Crabtree J."/>
            <person name="Sebaihia M."/>
            <person name="Thomson N.R."/>
            <person name="Chaudhuri R."/>
            <person name="Henderson I.R."/>
            <person name="Sperandio V."/>
            <person name="Ravel J."/>
        </authorList>
    </citation>
    <scope>NUCLEOTIDE SEQUENCE [LARGE SCALE GENOMIC DNA]</scope>
    <source>
        <strain>E24377A / ETEC</strain>
    </source>
</reference>
<protein>
    <recommendedName>
        <fullName evidence="1">Protein Ves</fullName>
    </recommendedName>
</protein>
<proteinExistence type="inferred from homology"/>
<sequence>MEYFDMRKMSVNLWRNAAGETREICTFPPAKRDFYWRASIASIAANGEFSLFPGMERIVTLLEGGEMFLESADHFNHTLKPLQPFAFAADQVVKAKLTAGQMSMDFNIMTRLDVCKAKVRIAERTFTTFGSRGGVVFVINGAWQLGDKLLTTDQGACWFDGRHTLRLLQPQGKLLFSEINWLAGHSPDQVQ</sequence>
<comment type="similarity">
    <text evidence="1">Belongs to the Ves family.</text>
</comment>
<evidence type="ECO:0000255" key="1">
    <source>
        <dbReference type="HAMAP-Rule" id="MF_01591"/>
    </source>
</evidence>
<keyword id="KW-1185">Reference proteome</keyword>
<feature type="chain" id="PRO_1000069335" description="Protein Ves">
    <location>
        <begin position="1"/>
        <end position="191"/>
    </location>
</feature>
<gene>
    <name evidence="1" type="primary">ves</name>
    <name type="ordered locus">EcE24377A_1962</name>
</gene>
<organism>
    <name type="scientific">Escherichia coli O139:H28 (strain E24377A / ETEC)</name>
    <dbReference type="NCBI Taxonomy" id="331111"/>
    <lineage>
        <taxon>Bacteria</taxon>
        <taxon>Pseudomonadati</taxon>
        <taxon>Pseudomonadota</taxon>
        <taxon>Gammaproteobacteria</taxon>
        <taxon>Enterobacterales</taxon>
        <taxon>Enterobacteriaceae</taxon>
        <taxon>Escherichia</taxon>
    </lineage>
</organism>
<accession>A7ZMK9</accession>